<proteinExistence type="inferred from homology"/>
<gene>
    <name evidence="1" type="primary">gloB</name>
    <name type="ordered locus">Tcr_0926</name>
</gene>
<accession>Q31H51</accession>
<dbReference type="EC" id="3.1.2.6" evidence="1"/>
<dbReference type="EMBL" id="CP000109">
    <property type="protein sequence ID" value="ABB41522.1"/>
    <property type="molecule type" value="Genomic_DNA"/>
</dbReference>
<dbReference type="SMR" id="Q31H51"/>
<dbReference type="STRING" id="317025.Tcr_0926"/>
<dbReference type="KEGG" id="tcx:Tcr_0926"/>
<dbReference type="eggNOG" id="COG0491">
    <property type="taxonomic scope" value="Bacteria"/>
</dbReference>
<dbReference type="HOGENOM" id="CLU_030571_4_1_6"/>
<dbReference type="OrthoDB" id="9802248at2"/>
<dbReference type="UniPathway" id="UPA00619">
    <property type="reaction ID" value="UER00676"/>
</dbReference>
<dbReference type="GO" id="GO:0004416">
    <property type="term" value="F:hydroxyacylglutathione hydrolase activity"/>
    <property type="evidence" value="ECO:0007669"/>
    <property type="project" value="UniProtKB-UniRule"/>
</dbReference>
<dbReference type="GO" id="GO:0046872">
    <property type="term" value="F:metal ion binding"/>
    <property type="evidence" value="ECO:0007669"/>
    <property type="project" value="UniProtKB-KW"/>
</dbReference>
<dbReference type="GO" id="GO:0019243">
    <property type="term" value="P:methylglyoxal catabolic process to D-lactate via S-lactoyl-glutathione"/>
    <property type="evidence" value="ECO:0007669"/>
    <property type="project" value="InterPro"/>
</dbReference>
<dbReference type="CDD" id="cd07723">
    <property type="entry name" value="hydroxyacylglutathione_hydrolase_MBL-fold"/>
    <property type="match status" value="1"/>
</dbReference>
<dbReference type="Gene3D" id="3.60.15.10">
    <property type="entry name" value="Ribonuclease Z/Hydroxyacylglutathione hydrolase-like"/>
    <property type="match status" value="1"/>
</dbReference>
<dbReference type="HAMAP" id="MF_01374">
    <property type="entry name" value="Glyoxalase_2"/>
    <property type="match status" value="1"/>
</dbReference>
<dbReference type="InterPro" id="IPR035680">
    <property type="entry name" value="Clx_II_MBL"/>
</dbReference>
<dbReference type="InterPro" id="IPR050110">
    <property type="entry name" value="Glyoxalase_II_hydrolase"/>
</dbReference>
<dbReference type="InterPro" id="IPR032282">
    <property type="entry name" value="HAGH_C"/>
</dbReference>
<dbReference type="InterPro" id="IPR017782">
    <property type="entry name" value="Hydroxyacylglutathione_Hdrlase"/>
</dbReference>
<dbReference type="InterPro" id="IPR001279">
    <property type="entry name" value="Metallo-B-lactamas"/>
</dbReference>
<dbReference type="InterPro" id="IPR036866">
    <property type="entry name" value="RibonucZ/Hydroxyglut_hydro"/>
</dbReference>
<dbReference type="NCBIfam" id="TIGR03413">
    <property type="entry name" value="GSH_gloB"/>
    <property type="match status" value="1"/>
</dbReference>
<dbReference type="PANTHER" id="PTHR43705">
    <property type="entry name" value="HYDROXYACYLGLUTATHIONE HYDROLASE"/>
    <property type="match status" value="1"/>
</dbReference>
<dbReference type="PANTHER" id="PTHR43705:SF1">
    <property type="entry name" value="HYDROXYACYLGLUTATHIONE HYDROLASE GLOB"/>
    <property type="match status" value="1"/>
</dbReference>
<dbReference type="Pfam" id="PF16123">
    <property type="entry name" value="HAGH_C"/>
    <property type="match status" value="1"/>
</dbReference>
<dbReference type="Pfam" id="PF00753">
    <property type="entry name" value="Lactamase_B"/>
    <property type="match status" value="1"/>
</dbReference>
<dbReference type="PIRSF" id="PIRSF005457">
    <property type="entry name" value="Glx"/>
    <property type="match status" value="1"/>
</dbReference>
<dbReference type="SMART" id="SM00849">
    <property type="entry name" value="Lactamase_B"/>
    <property type="match status" value="1"/>
</dbReference>
<dbReference type="SUPFAM" id="SSF56281">
    <property type="entry name" value="Metallo-hydrolase/oxidoreductase"/>
    <property type="match status" value="1"/>
</dbReference>
<evidence type="ECO:0000255" key="1">
    <source>
        <dbReference type="HAMAP-Rule" id="MF_01374"/>
    </source>
</evidence>
<protein>
    <recommendedName>
        <fullName evidence="1">Hydroxyacylglutathione hydrolase</fullName>
        <ecNumber evidence="1">3.1.2.6</ecNumber>
    </recommendedName>
    <alternativeName>
        <fullName evidence="1">Glyoxalase II</fullName>
        <shortName evidence="1">Glx II</shortName>
    </alternativeName>
</protein>
<organism>
    <name type="scientific">Hydrogenovibrio crunogenus (strain DSM 25203 / XCL-2)</name>
    <name type="common">Thiomicrospira crunogena</name>
    <dbReference type="NCBI Taxonomy" id="317025"/>
    <lineage>
        <taxon>Bacteria</taxon>
        <taxon>Pseudomonadati</taxon>
        <taxon>Pseudomonadota</taxon>
        <taxon>Gammaproteobacteria</taxon>
        <taxon>Thiotrichales</taxon>
        <taxon>Piscirickettsiaceae</taxon>
        <taxon>Hydrogenovibrio</taxon>
    </lineage>
</organism>
<name>GLO2_HYDCU</name>
<sequence length="268" mass="30195">MKIVGLPTLSDNYTWVIQSENADDKRAWIVDPGESQKVIHYFEENQLQLDGILLTHHHYDHTDGIMGVMDALGEVAIVSNAQGPFKPVTHPVKEGDQVQVLNETFQVIETPGHTDEHICFYHPEALFSGDTLFTGGCGKIWQNPPEQMAESLLKLRALNDDCMVYCGHEYTYANLNFAKIAEPNTPAILDRLAEVKTNTQRNIPCVPARLGLEKQTNPFLRFDHPPLMQTLMERQAQPNESVSTLFATLRAWKDELDQTNILEAGLND</sequence>
<comment type="function">
    <text evidence="1">Thiolesterase that catalyzes the hydrolysis of S-D-lactoyl-glutathione to form glutathione and D-lactic acid.</text>
</comment>
<comment type="catalytic activity">
    <reaction evidence="1">
        <text>an S-(2-hydroxyacyl)glutathione + H2O = a 2-hydroxy carboxylate + glutathione + H(+)</text>
        <dbReference type="Rhea" id="RHEA:21864"/>
        <dbReference type="ChEBI" id="CHEBI:15377"/>
        <dbReference type="ChEBI" id="CHEBI:15378"/>
        <dbReference type="ChEBI" id="CHEBI:57925"/>
        <dbReference type="ChEBI" id="CHEBI:58896"/>
        <dbReference type="ChEBI" id="CHEBI:71261"/>
        <dbReference type="EC" id="3.1.2.6"/>
    </reaction>
</comment>
<comment type="cofactor">
    <cofactor evidence="1">
        <name>Zn(2+)</name>
        <dbReference type="ChEBI" id="CHEBI:29105"/>
    </cofactor>
    <text evidence="1">Binds 2 Zn(2+) ions per subunit.</text>
</comment>
<comment type="pathway">
    <text evidence="1">Secondary metabolite metabolism; methylglyoxal degradation; (R)-lactate from methylglyoxal: step 2/2.</text>
</comment>
<comment type="subunit">
    <text evidence="1">Monomer.</text>
</comment>
<comment type="similarity">
    <text evidence="1">Belongs to the metallo-beta-lactamase superfamily. Glyoxalase II family.</text>
</comment>
<feature type="chain" id="PRO_0000309718" description="Hydroxyacylglutathione hydrolase">
    <location>
        <begin position="1"/>
        <end position="268"/>
    </location>
</feature>
<feature type="binding site" evidence="1">
    <location>
        <position position="56"/>
    </location>
    <ligand>
        <name>Zn(2+)</name>
        <dbReference type="ChEBI" id="CHEBI:29105"/>
        <label>1</label>
    </ligand>
</feature>
<feature type="binding site" evidence="1">
    <location>
        <position position="58"/>
    </location>
    <ligand>
        <name>Zn(2+)</name>
        <dbReference type="ChEBI" id="CHEBI:29105"/>
        <label>1</label>
    </ligand>
</feature>
<feature type="binding site" evidence="1">
    <location>
        <position position="60"/>
    </location>
    <ligand>
        <name>Zn(2+)</name>
        <dbReference type="ChEBI" id="CHEBI:29105"/>
        <label>2</label>
    </ligand>
</feature>
<feature type="binding site" evidence="1">
    <location>
        <position position="61"/>
    </location>
    <ligand>
        <name>Zn(2+)</name>
        <dbReference type="ChEBI" id="CHEBI:29105"/>
        <label>2</label>
    </ligand>
</feature>
<feature type="binding site" evidence="1">
    <location>
        <position position="113"/>
    </location>
    <ligand>
        <name>Zn(2+)</name>
        <dbReference type="ChEBI" id="CHEBI:29105"/>
        <label>1</label>
    </ligand>
</feature>
<feature type="binding site" evidence="1">
    <location>
        <position position="130"/>
    </location>
    <ligand>
        <name>Zn(2+)</name>
        <dbReference type="ChEBI" id="CHEBI:29105"/>
        <label>1</label>
    </ligand>
</feature>
<feature type="binding site" evidence="1">
    <location>
        <position position="130"/>
    </location>
    <ligand>
        <name>Zn(2+)</name>
        <dbReference type="ChEBI" id="CHEBI:29105"/>
        <label>2</label>
    </ligand>
</feature>
<feature type="binding site" evidence="1">
    <location>
        <position position="168"/>
    </location>
    <ligand>
        <name>Zn(2+)</name>
        <dbReference type="ChEBI" id="CHEBI:29105"/>
        <label>2</label>
    </ligand>
</feature>
<reference key="1">
    <citation type="journal article" date="2006" name="PLoS Biol.">
        <title>The genome of deep-sea vent chemolithoautotroph Thiomicrospira crunogena XCL-2.</title>
        <authorList>
            <person name="Scott K.M."/>
            <person name="Sievert S.M."/>
            <person name="Abril F.N."/>
            <person name="Ball L.A."/>
            <person name="Barrett C.J."/>
            <person name="Blake R.A."/>
            <person name="Boller A.J."/>
            <person name="Chain P.S.G."/>
            <person name="Clark J.A."/>
            <person name="Davis C.R."/>
            <person name="Detter C."/>
            <person name="Do K.F."/>
            <person name="Dobrinski K.P."/>
            <person name="Faza B.I."/>
            <person name="Fitzpatrick K.A."/>
            <person name="Freyermuth S.K."/>
            <person name="Harmer T.L."/>
            <person name="Hauser L.J."/>
            <person name="Huegler M."/>
            <person name="Kerfeld C.A."/>
            <person name="Klotz M.G."/>
            <person name="Kong W.W."/>
            <person name="Land M."/>
            <person name="Lapidus A."/>
            <person name="Larimer F.W."/>
            <person name="Longo D.L."/>
            <person name="Lucas S."/>
            <person name="Malfatti S.A."/>
            <person name="Massey S.E."/>
            <person name="Martin D.D."/>
            <person name="McCuddin Z."/>
            <person name="Meyer F."/>
            <person name="Moore J.L."/>
            <person name="Ocampo L.H. Jr."/>
            <person name="Paul J.H."/>
            <person name="Paulsen I.T."/>
            <person name="Reep D.K."/>
            <person name="Ren Q."/>
            <person name="Ross R.L."/>
            <person name="Sato P.Y."/>
            <person name="Thomas P."/>
            <person name="Tinkham L.E."/>
            <person name="Zeruth G.T."/>
        </authorList>
    </citation>
    <scope>NUCLEOTIDE SEQUENCE [LARGE SCALE GENOMIC DNA]</scope>
    <source>
        <strain>DSM 25203 / XCL-2</strain>
    </source>
</reference>
<keyword id="KW-0378">Hydrolase</keyword>
<keyword id="KW-0479">Metal-binding</keyword>
<keyword id="KW-0862">Zinc</keyword>